<sequence>MAKLTKKMKAIKAGVDSTKAYEINEAIAVLKQFATAKFVESVDVAVNLGIDPRKSDQNVRGATVLPHGTGREVRVAVFTQGANADAAKEAGADLVGMEDLAEQIKKGEMNFDVVIASPDAMRVVGQLGQVLGPRGLMPNPKVGTVTPNVAEAVKNAKSGQIRYRNDKNGIIHTTIGKANFSEVQLKENLQALLAALNKAKPTTAKGIFIKKVSISTTMGAGVAVDQASL</sequence>
<proteinExistence type="inferred from homology"/>
<comment type="function">
    <text evidence="1">Binds directly to 23S rRNA. The L1 stalk is quite mobile in the ribosome, and is involved in E site tRNA release.</text>
</comment>
<comment type="function">
    <text evidence="1">Protein L1 is also a translational repressor protein, it controls the translation of the L11 operon by binding to its mRNA.</text>
</comment>
<comment type="subunit">
    <text evidence="1">Part of the 50S ribosomal subunit.</text>
</comment>
<comment type="similarity">
    <text evidence="1">Belongs to the universal ribosomal protein uL1 family.</text>
</comment>
<accession>Q4QN32</accession>
<feature type="chain" id="PRO_0000230610" description="Large ribosomal subunit protein uL1">
    <location>
        <begin position="1"/>
        <end position="229"/>
    </location>
</feature>
<dbReference type="EMBL" id="CP000057">
    <property type="protein sequence ID" value="AAX87565.1"/>
    <property type="molecule type" value="Genomic_DNA"/>
</dbReference>
<dbReference type="RefSeq" id="WP_005649467.1">
    <property type="nucleotide sequence ID" value="NC_007146.2"/>
</dbReference>
<dbReference type="SMR" id="Q4QN32"/>
<dbReference type="GeneID" id="56957228"/>
<dbReference type="KEGG" id="hit:NTHI0642"/>
<dbReference type="HOGENOM" id="CLU_062853_0_0_6"/>
<dbReference type="Proteomes" id="UP000002525">
    <property type="component" value="Chromosome"/>
</dbReference>
<dbReference type="GO" id="GO:0022625">
    <property type="term" value="C:cytosolic large ribosomal subunit"/>
    <property type="evidence" value="ECO:0007669"/>
    <property type="project" value="TreeGrafter"/>
</dbReference>
<dbReference type="GO" id="GO:0019843">
    <property type="term" value="F:rRNA binding"/>
    <property type="evidence" value="ECO:0007669"/>
    <property type="project" value="UniProtKB-UniRule"/>
</dbReference>
<dbReference type="GO" id="GO:0003735">
    <property type="term" value="F:structural constituent of ribosome"/>
    <property type="evidence" value="ECO:0007669"/>
    <property type="project" value="InterPro"/>
</dbReference>
<dbReference type="GO" id="GO:0000049">
    <property type="term" value="F:tRNA binding"/>
    <property type="evidence" value="ECO:0007669"/>
    <property type="project" value="UniProtKB-KW"/>
</dbReference>
<dbReference type="GO" id="GO:0006417">
    <property type="term" value="P:regulation of translation"/>
    <property type="evidence" value="ECO:0007669"/>
    <property type="project" value="UniProtKB-KW"/>
</dbReference>
<dbReference type="GO" id="GO:0006412">
    <property type="term" value="P:translation"/>
    <property type="evidence" value="ECO:0007669"/>
    <property type="project" value="UniProtKB-UniRule"/>
</dbReference>
<dbReference type="CDD" id="cd00403">
    <property type="entry name" value="Ribosomal_L1"/>
    <property type="match status" value="1"/>
</dbReference>
<dbReference type="FunFam" id="3.40.50.790:FF:000001">
    <property type="entry name" value="50S ribosomal protein L1"/>
    <property type="match status" value="1"/>
</dbReference>
<dbReference type="Gene3D" id="3.30.190.20">
    <property type="match status" value="1"/>
</dbReference>
<dbReference type="Gene3D" id="3.40.50.790">
    <property type="match status" value="1"/>
</dbReference>
<dbReference type="HAMAP" id="MF_01318_B">
    <property type="entry name" value="Ribosomal_uL1_B"/>
    <property type="match status" value="1"/>
</dbReference>
<dbReference type="InterPro" id="IPR005878">
    <property type="entry name" value="Ribosom_uL1_bac-type"/>
</dbReference>
<dbReference type="InterPro" id="IPR002143">
    <property type="entry name" value="Ribosomal_uL1"/>
</dbReference>
<dbReference type="InterPro" id="IPR023674">
    <property type="entry name" value="Ribosomal_uL1-like"/>
</dbReference>
<dbReference type="InterPro" id="IPR028364">
    <property type="entry name" value="Ribosomal_uL1/biogenesis"/>
</dbReference>
<dbReference type="InterPro" id="IPR016095">
    <property type="entry name" value="Ribosomal_uL1_3-a/b-sand"/>
</dbReference>
<dbReference type="InterPro" id="IPR023673">
    <property type="entry name" value="Ribosomal_uL1_CS"/>
</dbReference>
<dbReference type="NCBIfam" id="TIGR01169">
    <property type="entry name" value="rplA_bact"/>
    <property type="match status" value="1"/>
</dbReference>
<dbReference type="PANTHER" id="PTHR36427">
    <property type="entry name" value="54S RIBOSOMAL PROTEIN L1, MITOCHONDRIAL"/>
    <property type="match status" value="1"/>
</dbReference>
<dbReference type="PANTHER" id="PTHR36427:SF3">
    <property type="entry name" value="LARGE RIBOSOMAL SUBUNIT PROTEIN UL1M"/>
    <property type="match status" value="1"/>
</dbReference>
<dbReference type="Pfam" id="PF00687">
    <property type="entry name" value="Ribosomal_L1"/>
    <property type="match status" value="1"/>
</dbReference>
<dbReference type="PIRSF" id="PIRSF002155">
    <property type="entry name" value="Ribosomal_L1"/>
    <property type="match status" value="1"/>
</dbReference>
<dbReference type="SUPFAM" id="SSF56808">
    <property type="entry name" value="Ribosomal protein L1"/>
    <property type="match status" value="1"/>
</dbReference>
<dbReference type="PROSITE" id="PS01199">
    <property type="entry name" value="RIBOSOMAL_L1"/>
    <property type="match status" value="1"/>
</dbReference>
<keyword id="KW-0678">Repressor</keyword>
<keyword id="KW-0687">Ribonucleoprotein</keyword>
<keyword id="KW-0689">Ribosomal protein</keyword>
<keyword id="KW-0694">RNA-binding</keyword>
<keyword id="KW-0699">rRNA-binding</keyword>
<keyword id="KW-0810">Translation regulation</keyword>
<keyword id="KW-0820">tRNA-binding</keyword>
<reference key="1">
    <citation type="journal article" date="2005" name="J. Bacteriol.">
        <title>Genomic sequence of an otitis media isolate of nontypeable Haemophilus influenzae: comparative study with H. influenzae serotype d, strain KW20.</title>
        <authorList>
            <person name="Harrison A."/>
            <person name="Dyer D.W."/>
            <person name="Gillaspy A."/>
            <person name="Ray W.C."/>
            <person name="Mungur R."/>
            <person name="Carson M.B."/>
            <person name="Zhong H."/>
            <person name="Gipson J."/>
            <person name="Gipson M."/>
            <person name="Johnson L.S."/>
            <person name="Lewis L."/>
            <person name="Bakaletz L.O."/>
            <person name="Munson R.S. Jr."/>
        </authorList>
    </citation>
    <scope>NUCLEOTIDE SEQUENCE [LARGE SCALE GENOMIC DNA]</scope>
    <source>
        <strain>86-028NP</strain>
    </source>
</reference>
<organism>
    <name type="scientific">Haemophilus influenzae (strain 86-028NP)</name>
    <dbReference type="NCBI Taxonomy" id="281310"/>
    <lineage>
        <taxon>Bacteria</taxon>
        <taxon>Pseudomonadati</taxon>
        <taxon>Pseudomonadota</taxon>
        <taxon>Gammaproteobacteria</taxon>
        <taxon>Pasteurellales</taxon>
        <taxon>Pasteurellaceae</taxon>
        <taxon>Haemophilus</taxon>
    </lineage>
</organism>
<evidence type="ECO:0000255" key="1">
    <source>
        <dbReference type="HAMAP-Rule" id="MF_01318"/>
    </source>
</evidence>
<evidence type="ECO:0000305" key="2"/>
<protein>
    <recommendedName>
        <fullName evidence="1">Large ribosomal subunit protein uL1</fullName>
    </recommendedName>
    <alternativeName>
        <fullName evidence="2">50S ribosomal protein L1</fullName>
    </alternativeName>
</protein>
<name>RL1_HAEI8</name>
<gene>
    <name evidence="1" type="primary">rplA</name>
    <name type="ordered locus">NTHI0642</name>
</gene>